<sequence>MPARRRWFENRPVLKRIVLAVLALVVLPYVLIFFYLLPFIHPVSTLMLRDLVLLRGYDRRWVSLDEISPVLVQSVMMSEDGQYCFHGGVDWAEMRMLVEDTLKGQATRGGSTIPMQTAKNLFLWNSRSFVRKAMELPLAVSTDFVLSKRRLMEIYLNIAEWGPGIYGIEAAAQHHFKVPASKLTRRQASLLAVSLPNPIDRKAGKPGRGLRRLAGVIERRAQGSGEYIKCIYE</sequence>
<organism>
    <name type="scientific">Rhizobium etli (strain ATCC 51251 / DSM 11541 / JCM 21823 / NBRC 15573 / CFN 42)</name>
    <dbReference type="NCBI Taxonomy" id="347834"/>
    <lineage>
        <taxon>Bacteria</taxon>
        <taxon>Pseudomonadati</taxon>
        <taxon>Pseudomonadota</taxon>
        <taxon>Alphaproteobacteria</taxon>
        <taxon>Hyphomicrobiales</taxon>
        <taxon>Rhizobiaceae</taxon>
        <taxon>Rhizobium/Agrobacterium group</taxon>
        <taxon>Rhizobium</taxon>
    </lineage>
</organism>
<keyword id="KW-0997">Cell inner membrane</keyword>
<keyword id="KW-1003">Cell membrane</keyword>
<keyword id="KW-0133">Cell shape</keyword>
<keyword id="KW-0961">Cell wall biogenesis/degradation</keyword>
<keyword id="KW-0328">Glycosyltransferase</keyword>
<keyword id="KW-0472">Membrane</keyword>
<keyword id="KW-0573">Peptidoglycan synthesis</keyword>
<keyword id="KW-1185">Reference proteome</keyword>
<keyword id="KW-0808">Transferase</keyword>
<keyword id="KW-0812">Transmembrane</keyword>
<keyword id="KW-1133">Transmembrane helix</keyword>
<evidence type="ECO:0000255" key="1">
    <source>
        <dbReference type="HAMAP-Rule" id="MF_00766"/>
    </source>
</evidence>
<dbReference type="EC" id="2.4.99.28" evidence="1"/>
<dbReference type="EMBL" id="CP000133">
    <property type="protein sequence ID" value="ABC92756.1"/>
    <property type="molecule type" value="Genomic_DNA"/>
</dbReference>
<dbReference type="SMR" id="Q2K330"/>
<dbReference type="CAZy" id="GT51">
    <property type="family name" value="Glycosyltransferase Family 51"/>
</dbReference>
<dbReference type="KEGG" id="ret:RHE_CH04012"/>
<dbReference type="eggNOG" id="COG0744">
    <property type="taxonomic scope" value="Bacteria"/>
</dbReference>
<dbReference type="HOGENOM" id="CLU_006354_1_1_5"/>
<dbReference type="UniPathway" id="UPA00219"/>
<dbReference type="Proteomes" id="UP000001936">
    <property type="component" value="Chromosome"/>
</dbReference>
<dbReference type="GO" id="GO:0009274">
    <property type="term" value="C:peptidoglycan-based cell wall"/>
    <property type="evidence" value="ECO:0007669"/>
    <property type="project" value="InterPro"/>
</dbReference>
<dbReference type="GO" id="GO:0005886">
    <property type="term" value="C:plasma membrane"/>
    <property type="evidence" value="ECO:0007669"/>
    <property type="project" value="UniProtKB-SubCell"/>
</dbReference>
<dbReference type="GO" id="GO:0016763">
    <property type="term" value="F:pentosyltransferase activity"/>
    <property type="evidence" value="ECO:0007669"/>
    <property type="project" value="InterPro"/>
</dbReference>
<dbReference type="GO" id="GO:0008955">
    <property type="term" value="F:peptidoglycan glycosyltransferase activity"/>
    <property type="evidence" value="ECO:0007669"/>
    <property type="project" value="UniProtKB-UniRule"/>
</dbReference>
<dbReference type="GO" id="GO:0071555">
    <property type="term" value="P:cell wall organization"/>
    <property type="evidence" value="ECO:0007669"/>
    <property type="project" value="UniProtKB-KW"/>
</dbReference>
<dbReference type="GO" id="GO:0009252">
    <property type="term" value="P:peptidoglycan biosynthetic process"/>
    <property type="evidence" value="ECO:0007669"/>
    <property type="project" value="UniProtKB-UniRule"/>
</dbReference>
<dbReference type="GO" id="GO:0008360">
    <property type="term" value="P:regulation of cell shape"/>
    <property type="evidence" value="ECO:0007669"/>
    <property type="project" value="UniProtKB-KW"/>
</dbReference>
<dbReference type="Gene3D" id="1.10.3810.10">
    <property type="entry name" value="Biosynthetic peptidoglycan transglycosylase-like"/>
    <property type="match status" value="1"/>
</dbReference>
<dbReference type="HAMAP" id="MF_00766">
    <property type="entry name" value="PGT_MtgA"/>
    <property type="match status" value="1"/>
</dbReference>
<dbReference type="InterPro" id="IPR001264">
    <property type="entry name" value="Glyco_trans_51"/>
</dbReference>
<dbReference type="InterPro" id="IPR023346">
    <property type="entry name" value="Lysozyme-like_dom_sf"/>
</dbReference>
<dbReference type="InterPro" id="IPR036950">
    <property type="entry name" value="PBP_transglycosylase"/>
</dbReference>
<dbReference type="InterPro" id="IPR011812">
    <property type="entry name" value="Pep_trsgly"/>
</dbReference>
<dbReference type="NCBIfam" id="TIGR02070">
    <property type="entry name" value="mono_pep_trsgly"/>
    <property type="match status" value="1"/>
</dbReference>
<dbReference type="PANTHER" id="PTHR30400:SF0">
    <property type="entry name" value="BIOSYNTHETIC PEPTIDOGLYCAN TRANSGLYCOSYLASE"/>
    <property type="match status" value="1"/>
</dbReference>
<dbReference type="PANTHER" id="PTHR30400">
    <property type="entry name" value="MONOFUNCTIONAL BIOSYNTHETIC PEPTIDOGLYCAN TRANSGLYCOSYLASE"/>
    <property type="match status" value="1"/>
</dbReference>
<dbReference type="Pfam" id="PF00912">
    <property type="entry name" value="Transgly"/>
    <property type="match status" value="1"/>
</dbReference>
<dbReference type="SUPFAM" id="SSF53955">
    <property type="entry name" value="Lysozyme-like"/>
    <property type="match status" value="1"/>
</dbReference>
<name>MTGA_RHIEC</name>
<accession>Q2K330</accession>
<proteinExistence type="inferred from homology"/>
<reference key="1">
    <citation type="journal article" date="2006" name="Proc. Natl. Acad. Sci. U.S.A.">
        <title>The partitioned Rhizobium etli genome: genetic and metabolic redundancy in seven interacting replicons.</title>
        <authorList>
            <person name="Gonzalez V."/>
            <person name="Santamaria R.I."/>
            <person name="Bustos P."/>
            <person name="Hernandez-Gonzalez I."/>
            <person name="Medrano-Soto A."/>
            <person name="Moreno-Hagelsieb G."/>
            <person name="Janga S.C."/>
            <person name="Ramirez M.A."/>
            <person name="Jimenez-Jacinto V."/>
            <person name="Collado-Vides J."/>
            <person name="Davila G."/>
        </authorList>
    </citation>
    <scope>NUCLEOTIDE SEQUENCE [LARGE SCALE GENOMIC DNA]</scope>
    <source>
        <strain>ATCC 51251 / DSM 11541 / JCM 21823 / NBRC 15573 / CFN 42</strain>
    </source>
</reference>
<protein>
    <recommendedName>
        <fullName evidence="1">Biosynthetic peptidoglycan transglycosylase</fullName>
        <ecNumber evidence="1">2.4.99.28</ecNumber>
    </recommendedName>
    <alternativeName>
        <fullName evidence="1">Glycan polymerase</fullName>
    </alternativeName>
    <alternativeName>
        <fullName evidence="1">Peptidoglycan glycosyltransferase MtgA</fullName>
        <shortName evidence="1">PGT</shortName>
    </alternativeName>
</protein>
<feature type="chain" id="PRO_0000257685" description="Biosynthetic peptidoglycan transglycosylase">
    <location>
        <begin position="1"/>
        <end position="233"/>
    </location>
</feature>
<feature type="transmembrane region" description="Helical" evidence="1">
    <location>
        <begin position="17"/>
        <end position="37"/>
    </location>
</feature>
<gene>
    <name evidence="1" type="primary">mtgA</name>
    <name type="ordered locus">RHE_CH04012</name>
</gene>
<comment type="function">
    <text evidence="1">Peptidoglycan polymerase that catalyzes glycan chain elongation from lipid-linked precursors.</text>
</comment>
<comment type="catalytic activity">
    <reaction evidence="1">
        <text>[GlcNAc-(1-&gt;4)-Mur2Ac(oyl-L-Ala-gamma-D-Glu-L-Lys-D-Ala-D-Ala)](n)-di-trans,octa-cis-undecaprenyl diphosphate + beta-D-GlcNAc-(1-&gt;4)-Mur2Ac(oyl-L-Ala-gamma-D-Glu-L-Lys-D-Ala-D-Ala)-di-trans,octa-cis-undecaprenyl diphosphate = [GlcNAc-(1-&gt;4)-Mur2Ac(oyl-L-Ala-gamma-D-Glu-L-Lys-D-Ala-D-Ala)](n+1)-di-trans,octa-cis-undecaprenyl diphosphate + di-trans,octa-cis-undecaprenyl diphosphate + H(+)</text>
        <dbReference type="Rhea" id="RHEA:23708"/>
        <dbReference type="Rhea" id="RHEA-COMP:9602"/>
        <dbReference type="Rhea" id="RHEA-COMP:9603"/>
        <dbReference type="ChEBI" id="CHEBI:15378"/>
        <dbReference type="ChEBI" id="CHEBI:58405"/>
        <dbReference type="ChEBI" id="CHEBI:60033"/>
        <dbReference type="ChEBI" id="CHEBI:78435"/>
        <dbReference type="EC" id="2.4.99.28"/>
    </reaction>
</comment>
<comment type="pathway">
    <text evidence="1">Cell wall biogenesis; peptidoglycan biosynthesis.</text>
</comment>
<comment type="subcellular location">
    <subcellularLocation>
        <location evidence="1">Cell inner membrane</location>
        <topology evidence="1">Single-pass membrane protein</topology>
    </subcellularLocation>
</comment>
<comment type="similarity">
    <text evidence="1">Belongs to the glycosyltransferase 51 family.</text>
</comment>